<comment type="function">
    <text evidence="1 3 6 8">Dual specificity phosphatase; can dephosphorylate both phosphotyrosine and phosphoserine or phosphothreonine residues (PubMed:24714587, PubMed:38225265). Activates the JNK signaling pathway (PubMed:11717427). Inhibits T-cell receptor signaling and T-cell mediated immune responses, acting, at least in part, by inducing degradation of E3 ubiquitin ligase UBR2 (PubMed:24714587, PubMed:38225265). Dephosphorylates and thereby induces 'Lys-48'-linked ubiquitination of UBR2, leading to proteasomal degradation of UBR2 (PubMed:38225265). Dephosphorylates and thereby inactivates tyrosine kinase LCK (PubMed:24714587). Inhibits UBR2-mediated 'Lys-63'-linked ubiquitination of LCK (PubMed:38225265). May play a role in B-cell receptor (BCR) signaling and B-cell function (By similarity).</text>
</comment>
<comment type="catalytic activity">
    <reaction evidence="6">
        <text>O-phospho-L-tyrosyl-[protein] + H2O = L-tyrosyl-[protein] + phosphate</text>
        <dbReference type="Rhea" id="RHEA:10684"/>
        <dbReference type="Rhea" id="RHEA-COMP:10136"/>
        <dbReference type="Rhea" id="RHEA-COMP:20101"/>
        <dbReference type="ChEBI" id="CHEBI:15377"/>
        <dbReference type="ChEBI" id="CHEBI:43474"/>
        <dbReference type="ChEBI" id="CHEBI:46858"/>
        <dbReference type="ChEBI" id="CHEBI:61978"/>
        <dbReference type="EC" id="3.1.3.48"/>
    </reaction>
</comment>
<comment type="catalytic activity">
    <reaction evidence="8">
        <text>O-phospho-L-seryl-[protein] + H2O = L-seryl-[protein] + phosphate</text>
        <dbReference type="Rhea" id="RHEA:20629"/>
        <dbReference type="Rhea" id="RHEA-COMP:9863"/>
        <dbReference type="Rhea" id="RHEA-COMP:11604"/>
        <dbReference type="ChEBI" id="CHEBI:15377"/>
        <dbReference type="ChEBI" id="CHEBI:29999"/>
        <dbReference type="ChEBI" id="CHEBI:43474"/>
        <dbReference type="ChEBI" id="CHEBI:83421"/>
        <dbReference type="EC" id="3.1.3.16"/>
    </reaction>
</comment>
<comment type="catalytic activity">
    <reaction evidence="8">
        <text>O-phospho-L-threonyl-[protein] + H2O = L-threonyl-[protein] + phosphate</text>
        <dbReference type="Rhea" id="RHEA:47004"/>
        <dbReference type="Rhea" id="RHEA-COMP:11060"/>
        <dbReference type="Rhea" id="RHEA-COMP:11605"/>
        <dbReference type="ChEBI" id="CHEBI:15377"/>
        <dbReference type="ChEBI" id="CHEBI:30013"/>
        <dbReference type="ChEBI" id="CHEBI:43474"/>
        <dbReference type="ChEBI" id="CHEBI:61977"/>
        <dbReference type="EC" id="3.1.3.16"/>
    </reaction>
</comment>
<comment type="subunit">
    <text evidence="4 6 8">Monomer (PubMed:17068812). Interacts with LCK; the interaction is direct (PubMed:24714587). Interacts with UBR2; the interaction is direct (PubMed:38225265).</text>
</comment>
<comment type="subcellular location">
    <subcellularLocation>
        <location evidence="5">Cytoplasm</location>
    </subcellularLocation>
</comment>
<comment type="alternative products">
    <event type="alternative splicing"/>
    <isoform>
        <id>Q9NRW4-1</id>
        <name>1</name>
        <sequence type="displayed"/>
    </isoform>
    <isoform>
        <id>Q9NRW4-2</id>
        <name>2</name>
        <sequence type="described" ref="VSP_019614"/>
    </isoform>
</comment>
<comment type="tissue specificity">
    <text evidence="3">Ubiquitous. Highest expression seen in heart, placenta, lung, liver, kidney and pancreas.</text>
</comment>
<comment type="PTM">
    <text evidence="5">Myristoylation regulates subcellular location, and is necessary for activation of JNK.</text>
</comment>
<comment type="similarity">
    <text evidence="16">Belongs to the protein-tyrosine phosphatase family. Non-receptor class dual specificity subfamily.</text>
</comment>
<comment type="sequence caution" evidence="16">
    <conflict type="erroneous initiation">
        <sequence resource="EMBL-CDS" id="AAH16844"/>
    </conflict>
</comment>
<dbReference type="EC" id="3.1.3.16" evidence="8"/>
<dbReference type="EC" id="3.1.3.48" evidence="6"/>
<dbReference type="EMBL" id="AF424702">
    <property type="protein sequence ID" value="AAL18850.1"/>
    <property type="molecule type" value="mRNA"/>
</dbReference>
<dbReference type="EMBL" id="AF165519">
    <property type="protein sequence ID" value="AAF86649.1"/>
    <property type="molecule type" value="mRNA"/>
</dbReference>
<dbReference type="EMBL" id="AY249859">
    <property type="protein sequence ID" value="AAP76376.1"/>
    <property type="molecule type" value="mRNA"/>
</dbReference>
<dbReference type="EMBL" id="AK296402">
    <property type="protein sequence ID" value="BAG59068.1"/>
    <property type="molecule type" value="mRNA"/>
</dbReference>
<dbReference type="EMBL" id="AL365272">
    <property type="status" value="NOT_ANNOTATED_CDS"/>
    <property type="molecule type" value="Genomic_DNA"/>
</dbReference>
<dbReference type="EMBL" id="BC016844">
    <property type="protein sequence ID" value="AAH16844.1"/>
    <property type="status" value="ALT_INIT"/>
    <property type="molecule type" value="mRNA"/>
</dbReference>
<dbReference type="EMBL" id="BC022847">
    <property type="protein sequence ID" value="AAH22847.1"/>
    <property type="molecule type" value="mRNA"/>
</dbReference>
<dbReference type="EMBL" id="AB208997">
    <property type="protein sequence ID" value="BAD92234.1"/>
    <property type="molecule type" value="mRNA"/>
</dbReference>
<dbReference type="CCDS" id="CCDS4468.1">
    <molecule id="Q9NRW4-1"/>
</dbReference>
<dbReference type="CCDS" id="CCDS69035.1">
    <molecule id="Q9NRW4-2"/>
</dbReference>
<dbReference type="RefSeq" id="NP_001273484.1">
    <molecule id="Q9NRW4-2"/>
    <property type="nucleotide sequence ID" value="NM_001286555.3"/>
</dbReference>
<dbReference type="RefSeq" id="NP_064570.1">
    <molecule id="Q9NRW4-1"/>
    <property type="nucleotide sequence ID" value="NM_020185.6"/>
</dbReference>
<dbReference type="PDB" id="1WRM">
    <property type="method" value="X-ray"/>
    <property type="resolution" value="1.50 A"/>
    <property type="chains" value="A=1-163"/>
</dbReference>
<dbReference type="PDB" id="4WOH">
    <property type="method" value="X-ray"/>
    <property type="resolution" value="1.34 A"/>
    <property type="chains" value="A=1-163"/>
</dbReference>
<dbReference type="PDB" id="6L1S">
    <property type="method" value="X-ray"/>
    <property type="resolution" value="1.36 A"/>
    <property type="chains" value="A=1-155"/>
</dbReference>
<dbReference type="PDB" id="6LMY">
    <property type="method" value="X-ray"/>
    <property type="resolution" value="1.50 A"/>
    <property type="chains" value="A=1-155"/>
</dbReference>
<dbReference type="PDB" id="6LOT">
    <property type="method" value="X-ray"/>
    <property type="resolution" value="1.69 A"/>
    <property type="chains" value="A=1-155"/>
</dbReference>
<dbReference type="PDB" id="6LOU">
    <property type="method" value="X-ray"/>
    <property type="resolution" value="1.53 A"/>
    <property type="chains" value="A=1-155"/>
</dbReference>
<dbReference type="PDB" id="6LVQ">
    <property type="method" value="X-ray"/>
    <property type="resolution" value="1.38 A"/>
    <property type="chains" value="A=1-155"/>
</dbReference>
<dbReference type="PDB" id="7C8S">
    <property type="method" value="X-ray"/>
    <property type="resolution" value="1.31 A"/>
    <property type="chains" value="A=1-155"/>
</dbReference>
<dbReference type="PDBsum" id="1WRM"/>
<dbReference type="PDBsum" id="4WOH"/>
<dbReference type="PDBsum" id="6L1S"/>
<dbReference type="PDBsum" id="6LMY"/>
<dbReference type="PDBsum" id="6LOT"/>
<dbReference type="PDBsum" id="6LOU"/>
<dbReference type="PDBsum" id="6LVQ"/>
<dbReference type="PDBsum" id="7C8S"/>
<dbReference type="SMR" id="Q9NRW4"/>
<dbReference type="BioGRID" id="121264">
    <property type="interactions" value="139"/>
</dbReference>
<dbReference type="FunCoup" id="Q9NRW4">
    <property type="interactions" value="290"/>
</dbReference>
<dbReference type="IntAct" id="Q9NRW4">
    <property type="interactions" value="51"/>
</dbReference>
<dbReference type="MINT" id="Q9NRW4"/>
<dbReference type="STRING" id="9606.ENSP00000397459"/>
<dbReference type="BindingDB" id="Q9NRW4"/>
<dbReference type="ChEMBL" id="CHEMBL3924"/>
<dbReference type="DEPOD" id="DUSP22"/>
<dbReference type="iPTMnet" id="Q9NRW4"/>
<dbReference type="PhosphoSitePlus" id="Q9NRW4"/>
<dbReference type="BioMuta" id="DUSP22"/>
<dbReference type="DMDM" id="74752929"/>
<dbReference type="jPOST" id="Q9NRW4"/>
<dbReference type="MassIVE" id="Q9NRW4"/>
<dbReference type="PaxDb" id="9606-ENSP00000397459"/>
<dbReference type="PeptideAtlas" id="Q9NRW4"/>
<dbReference type="ProteomicsDB" id="82429">
    <molecule id="Q9NRW4-1"/>
</dbReference>
<dbReference type="ProteomicsDB" id="82430">
    <molecule id="Q9NRW4-2"/>
</dbReference>
<dbReference type="Antibodypedia" id="9106">
    <property type="antibodies" value="310 antibodies from 32 providers"/>
</dbReference>
<dbReference type="DNASU" id="56940"/>
<dbReference type="Ensembl" id="ENST00000344450.9">
    <molecule id="Q9NRW4-1"/>
    <property type="protein sequence ID" value="ENSP00000345281.5"/>
    <property type="gene ID" value="ENSG00000112679.15"/>
</dbReference>
<dbReference type="Ensembl" id="ENST00000419235.7">
    <molecule id="Q9NRW4-2"/>
    <property type="protein sequence ID" value="ENSP00000397459.2"/>
    <property type="gene ID" value="ENSG00000112679.15"/>
</dbReference>
<dbReference type="GeneID" id="56940"/>
<dbReference type="KEGG" id="hsa:56940"/>
<dbReference type="MANE-Select" id="ENST00000419235.7">
    <molecule id="Q9NRW4-2"/>
    <property type="protein sequence ID" value="ENSP00000397459.2"/>
    <property type="RefSeq nucleotide sequence ID" value="NM_001286555.3"/>
    <property type="RefSeq protein sequence ID" value="NP_001273484.1"/>
</dbReference>
<dbReference type="UCSC" id="uc003msx.5">
    <molecule id="Q9NRW4-1"/>
    <property type="organism name" value="human"/>
</dbReference>
<dbReference type="AGR" id="HGNC:16077"/>
<dbReference type="CTD" id="56940"/>
<dbReference type="DisGeNET" id="56940"/>
<dbReference type="GeneCards" id="DUSP22"/>
<dbReference type="HGNC" id="HGNC:16077">
    <property type="gene designation" value="DUSP22"/>
</dbReference>
<dbReference type="HPA" id="ENSG00000112679">
    <property type="expression patterns" value="Low tissue specificity"/>
</dbReference>
<dbReference type="MalaCards" id="DUSP22"/>
<dbReference type="MIM" id="616778">
    <property type="type" value="gene"/>
</dbReference>
<dbReference type="neXtProt" id="NX_Q9NRW4"/>
<dbReference type="OpenTargets" id="ENSG00000112679"/>
<dbReference type="PharmGKB" id="PA134991025"/>
<dbReference type="VEuPathDB" id="HostDB:ENSG00000112679"/>
<dbReference type="eggNOG" id="KOG1716">
    <property type="taxonomic scope" value="Eukaryota"/>
</dbReference>
<dbReference type="GeneTree" id="ENSGT00940000157153"/>
<dbReference type="HOGENOM" id="CLU_027074_5_1_1"/>
<dbReference type="InParanoid" id="Q9NRW4"/>
<dbReference type="OMA" id="CAYLMWK"/>
<dbReference type="OrthoDB" id="9508904at2759"/>
<dbReference type="PAN-GO" id="Q9NRW4">
    <property type="GO annotations" value="5 GO annotations based on evolutionary models"/>
</dbReference>
<dbReference type="PhylomeDB" id="Q9NRW4"/>
<dbReference type="TreeFam" id="TF105126"/>
<dbReference type="PathwayCommons" id="Q9NRW4"/>
<dbReference type="SABIO-RK" id="Q9NRW4"/>
<dbReference type="SignaLink" id="Q9NRW4"/>
<dbReference type="SIGNOR" id="Q9NRW4"/>
<dbReference type="BioGRID-ORCS" id="56940">
    <property type="hits" value="25 hits in 1176 CRISPR screens"/>
</dbReference>
<dbReference type="ChiTaRS" id="DUSP22">
    <property type="organism name" value="human"/>
</dbReference>
<dbReference type="EvolutionaryTrace" id="Q9NRW4"/>
<dbReference type="GeneWiki" id="DUSP22"/>
<dbReference type="GenomeRNAi" id="56940"/>
<dbReference type="Pharos" id="Q9NRW4">
    <property type="development level" value="Tbio"/>
</dbReference>
<dbReference type="PRO" id="PR:Q9NRW4"/>
<dbReference type="Proteomes" id="UP000005640">
    <property type="component" value="Chromosome 6"/>
</dbReference>
<dbReference type="RNAct" id="Q9NRW4">
    <property type="molecule type" value="protein"/>
</dbReference>
<dbReference type="Bgee" id="ENSG00000112679">
    <property type="expression patterns" value="Expressed in secondary oocyte and 201 other cell types or tissues"/>
</dbReference>
<dbReference type="ExpressionAtlas" id="Q9NRW4">
    <property type="expression patterns" value="baseline and differential"/>
</dbReference>
<dbReference type="GO" id="GO:0005737">
    <property type="term" value="C:cytoplasm"/>
    <property type="evidence" value="ECO:0000314"/>
    <property type="project" value="ARUK-UCL"/>
</dbReference>
<dbReference type="GO" id="GO:0005829">
    <property type="term" value="C:cytosol"/>
    <property type="evidence" value="ECO:0000318"/>
    <property type="project" value="GO_Central"/>
</dbReference>
<dbReference type="GO" id="GO:0031941">
    <property type="term" value="C:filamentous actin"/>
    <property type="evidence" value="ECO:0000314"/>
    <property type="project" value="ARUK-UCL"/>
</dbReference>
<dbReference type="GO" id="GO:0061851">
    <property type="term" value="C:leading edge of lamellipodium"/>
    <property type="evidence" value="ECO:0000314"/>
    <property type="project" value="ARUK-UCL"/>
</dbReference>
<dbReference type="GO" id="GO:0005886">
    <property type="term" value="C:plasma membrane"/>
    <property type="evidence" value="ECO:0000314"/>
    <property type="project" value="ARUK-UCL"/>
</dbReference>
<dbReference type="GO" id="GO:0004726">
    <property type="term" value="F:non-membrane spanning protein tyrosine phosphatase activity"/>
    <property type="evidence" value="ECO:0000314"/>
    <property type="project" value="ARUK-UCL"/>
</dbReference>
<dbReference type="GO" id="GO:0004722">
    <property type="term" value="F:protein serine/threonine phosphatase activity"/>
    <property type="evidence" value="ECO:0007669"/>
    <property type="project" value="UniProtKB-EC"/>
</dbReference>
<dbReference type="GO" id="GO:1990782">
    <property type="term" value="F:protein tyrosine kinase binding"/>
    <property type="evidence" value="ECO:0000353"/>
    <property type="project" value="ARUK-UCL"/>
</dbReference>
<dbReference type="GO" id="GO:0030292">
    <property type="term" value="F:protein tyrosine kinase inhibitor activity"/>
    <property type="evidence" value="ECO:0000314"/>
    <property type="project" value="ARUK-UCL"/>
</dbReference>
<dbReference type="GO" id="GO:0004725">
    <property type="term" value="F:protein tyrosine phosphatase activity"/>
    <property type="evidence" value="ECO:0000314"/>
    <property type="project" value="ARUK-UCL"/>
</dbReference>
<dbReference type="GO" id="GO:0008138">
    <property type="term" value="F:protein tyrosine/serine/threonine phosphatase activity"/>
    <property type="evidence" value="ECO:0000314"/>
    <property type="project" value="UniProt"/>
</dbReference>
<dbReference type="GO" id="GO:0071364">
    <property type="term" value="P:cellular response to epidermal growth factor stimulus"/>
    <property type="evidence" value="ECO:0000314"/>
    <property type="project" value="ARUK-UCL"/>
</dbReference>
<dbReference type="GO" id="GO:0002376">
    <property type="term" value="P:immune system process"/>
    <property type="evidence" value="ECO:0007669"/>
    <property type="project" value="UniProtKB-KW"/>
</dbReference>
<dbReference type="GO" id="GO:0035556">
    <property type="term" value="P:intracellular signal transduction"/>
    <property type="evidence" value="ECO:0000314"/>
    <property type="project" value="ARUK-UCL"/>
</dbReference>
<dbReference type="GO" id="GO:0030336">
    <property type="term" value="P:negative regulation of cell migration"/>
    <property type="evidence" value="ECO:0000315"/>
    <property type="project" value="ARUK-UCL"/>
</dbReference>
<dbReference type="GO" id="GO:0051895">
    <property type="term" value="P:negative regulation of focal adhesion assembly"/>
    <property type="evidence" value="ECO:0000314"/>
    <property type="project" value="ARUK-UCL"/>
</dbReference>
<dbReference type="GO" id="GO:0050868">
    <property type="term" value="P:negative regulation of T cell activation"/>
    <property type="evidence" value="ECO:0007669"/>
    <property type="project" value="Ensembl"/>
</dbReference>
<dbReference type="GO" id="GO:0002710">
    <property type="term" value="P:negative regulation of T cell mediated immunity"/>
    <property type="evidence" value="ECO:0007669"/>
    <property type="project" value="Ensembl"/>
</dbReference>
<dbReference type="GO" id="GO:0050860">
    <property type="term" value="P:negative regulation of T cell receptor signaling pathway"/>
    <property type="evidence" value="ECO:0000314"/>
    <property type="project" value="UniProt"/>
</dbReference>
<dbReference type="GO" id="GO:0000122">
    <property type="term" value="P:negative regulation of transcription by RNA polymerase II"/>
    <property type="evidence" value="ECO:0000315"/>
    <property type="project" value="MGI"/>
</dbReference>
<dbReference type="GO" id="GO:0046330">
    <property type="term" value="P:positive regulation of JNK cascade"/>
    <property type="evidence" value="ECO:0000318"/>
    <property type="project" value="GO_Central"/>
</dbReference>
<dbReference type="GO" id="GO:0042127">
    <property type="term" value="P:regulation of cell population proliferation"/>
    <property type="evidence" value="ECO:0007669"/>
    <property type="project" value="Ensembl"/>
</dbReference>
<dbReference type="GO" id="GO:0007179">
    <property type="term" value="P:transforming growth factor beta receptor signaling pathway"/>
    <property type="evidence" value="ECO:0000318"/>
    <property type="project" value="GO_Central"/>
</dbReference>
<dbReference type="CDD" id="cd14581">
    <property type="entry name" value="DUSP22"/>
    <property type="match status" value="1"/>
</dbReference>
<dbReference type="FunFam" id="3.90.190.10:FF:000048">
    <property type="entry name" value="dual specificity protein phosphatase 22 isoform X1"/>
    <property type="match status" value="1"/>
</dbReference>
<dbReference type="Gene3D" id="3.90.190.10">
    <property type="entry name" value="Protein tyrosine phosphatase superfamily"/>
    <property type="match status" value="1"/>
</dbReference>
<dbReference type="InterPro" id="IPR000340">
    <property type="entry name" value="Dual-sp_phosphatase_cat-dom"/>
</dbReference>
<dbReference type="InterPro" id="IPR029021">
    <property type="entry name" value="Prot-tyrosine_phosphatase-like"/>
</dbReference>
<dbReference type="InterPro" id="IPR000387">
    <property type="entry name" value="Tyr_Pase_dom"/>
</dbReference>
<dbReference type="InterPro" id="IPR020422">
    <property type="entry name" value="TYR_PHOSPHATASE_DUAL_dom"/>
</dbReference>
<dbReference type="PANTHER" id="PTHR45948:SF3">
    <property type="entry name" value="DUAL SPECIFICITY PROTEIN PHOSPHATASE 22"/>
    <property type="match status" value="1"/>
</dbReference>
<dbReference type="PANTHER" id="PTHR45948">
    <property type="entry name" value="DUAL SPECIFICITY PROTEIN PHOSPHATASE DDB_G0269404-RELATED"/>
    <property type="match status" value="1"/>
</dbReference>
<dbReference type="Pfam" id="PF00782">
    <property type="entry name" value="DSPc"/>
    <property type="match status" value="1"/>
</dbReference>
<dbReference type="PRINTS" id="PR01908">
    <property type="entry name" value="ADSPHPHTASE"/>
</dbReference>
<dbReference type="SMART" id="SM00195">
    <property type="entry name" value="DSPc"/>
    <property type="match status" value="1"/>
</dbReference>
<dbReference type="SUPFAM" id="SSF52799">
    <property type="entry name" value="(Phosphotyrosine protein) phosphatases II"/>
    <property type="match status" value="1"/>
</dbReference>
<dbReference type="PROSITE" id="PS50056">
    <property type="entry name" value="TYR_PHOSPHATASE_2"/>
    <property type="match status" value="1"/>
</dbReference>
<dbReference type="PROSITE" id="PS50054">
    <property type="entry name" value="TYR_PHOSPHATASE_DUAL"/>
    <property type="match status" value="1"/>
</dbReference>
<feature type="initiator methionine" description="Removed">
    <location>
        <position position="1"/>
    </location>
</feature>
<feature type="chain" id="PRO_0000244751" description="Dual specificity protein phosphatase 22">
    <location>
        <begin position="2"/>
        <end position="184"/>
    </location>
</feature>
<feature type="domain" description="Tyrosine-protein phosphatase" evidence="2">
    <location>
        <begin position="4"/>
        <end position="144"/>
    </location>
</feature>
<feature type="active site" description="Phosphocysteine intermediate" evidence="2 10 12 13">
    <location>
        <position position="88"/>
    </location>
</feature>
<feature type="binding site" evidence="17 18">
    <location>
        <position position="89"/>
    </location>
    <ligand>
        <name>a protein</name>
        <dbReference type="ChEBI" id="CHEBI:16541"/>
    </ligand>
    <ligandPart>
        <name>L-tyrosine-phosphate residue</name>
        <dbReference type="ChEBI" id="CHEBI:61978"/>
    </ligandPart>
</feature>
<feature type="binding site" evidence="17 18">
    <location>
        <position position="90"/>
    </location>
    <ligand>
        <name>a protein</name>
        <dbReference type="ChEBI" id="CHEBI:16541"/>
    </ligand>
    <ligandPart>
        <name>L-tyrosine-phosphate residue</name>
        <dbReference type="ChEBI" id="CHEBI:61978"/>
    </ligandPart>
</feature>
<feature type="binding site" evidence="17 18">
    <location>
        <position position="92"/>
    </location>
    <ligand>
        <name>a protein</name>
        <dbReference type="ChEBI" id="CHEBI:16541"/>
    </ligand>
    <ligandPart>
        <name>L-tyrosine-phosphate residue</name>
        <dbReference type="ChEBI" id="CHEBI:61978"/>
    </ligandPart>
</feature>
<feature type="binding site" evidence="17 18">
    <location>
        <position position="93"/>
    </location>
    <ligand>
        <name>a protein</name>
        <dbReference type="ChEBI" id="CHEBI:16541"/>
    </ligand>
    <ligandPart>
        <name>L-tyrosine-phosphate residue</name>
        <dbReference type="ChEBI" id="CHEBI:61978"/>
    </ligandPart>
</feature>
<feature type="binding site" evidence="17 18">
    <location>
        <position position="94"/>
    </location>
    <ligand>
        <name>a protein</name>
        <dbReference type="ChEBI" id="CHEBI:16541"/>
    </ligand>
    <ligandPart>
        <name>L-tyrosine-phosphate residue</name>
        <dbReference type="ChEBI" id="CHEBI:61978"/>
    </ligandPart>
</feature>
<feature type="modified residue" description="Phosphoserine" evidence="25">
    <location>
        <position position="58"/>
    </location>
</feature>
<feature type="lipid moiety-binding region" description="N-myristoyl glycine" evidence="5">
    <location>
        <position position="2"/>
    </location>
</feature>
<feature type="splice variant" id="VSP_019614" description="In isoform 2." evidence="9 15">
    <original>AAPGILKFWAFLRRL</original>
    <variation>GKYKEQGRTEPQPGARRWSSFPALAPLTYDNYTTET</variation>
    <location>
        <begin position="170"/>
        <end position="184"/>
    </location>
</feature>
<feature type="sequence variant" id="VAR_026912" description="In dbSNP:rs7768224.">
    <original>R</original>
    <variation>H</variation>
    <location>
        <position position="119"/>
    </location>
</feature>
<feature type="mutagenesis site" description="Over 40-fold decrease in catalytic efficiency for p-nitrophenyl phosphate." evidence="7">
    <original>D</original>
    <variation>A</variation>
    <variation>N</variation>
    <location>
        <position position="57"/>
    </location>
</feature>
<feature type="mutagenesis site" description="Does not dephosphorylate UBR2." evidence="8">
    <original>C</original>
    <variation>S</variation>
    <location>
        <position position="88"/>
    </location>
</feature>
<feature type="mutagenesis site" description="Over 150-fold decrease in catalytic efficiency for p-nitrophenyl phosphate." evidence="7">
    <original>S</original>
    <variation>A</variation>
    <variation>N</variation>
    <location>
        <position position="93"/>
    </location>
</feature>
<feature type="mutagenesis site" description="Over 100-fold decrease in catalytic efficiency for p-nitrophenyl phosphate." evidence="7">
    <original>N</original>
    <variation>A</variation>
    <variation>D</variation>
    <location>
        <position position="128"/>
    </location>
</feature>
<feature type="strand" evidence="26">
    <location>
        <begin position="6"/>
        <end position="9"/>
    </location>
</feature>
<feature type="strand" evidence="26">
    <location>
        <begin position="12"/>
        <end position="15"/>
    </location>
</feature>
<feature type="helix" evidence="26">
    <location>
        <begin position="19"/>
        <end position="21"/>
    </location>
</feature>
<feature type="helix" evidence="26">
    <location>
        <begin position="23"/>
        <end position="28"/>
    </location>
</feature>
<feature type="strand" evidence="26">
    <location>
        <begin position="31"/>
        <end position="38"/>
    </location>
</feature>
<feature type="strand" evidence="26">
    <location>
        <begin position="49"/>
        <end position="53"/>
    </location>
</feature>
<feature type="helix" evidence="26">
    <location>
        <begin position="64"/>
        <end position="66"/>
    </location>
</feature>
<feature type="helix" evidence="26">
    <location>
        <begin position="67"/>
        <end position="79"/>
    </location>
</feature>
<feature type="strand" evidence="26">
    <location>
        <begin position="83"/>
        <end position="87"/>
    </location>
</feature>
<feature type="strand" evidence="26">
    <location>
        <begin position="89"/>
        <end position="93"/>
    </location>
</feature>
<feature type="helix" evidence="26">
    <location>
        <begin position="94"/>
        <end position="106"/>
    </location>
</feature>
<feature type="helix" evidence="26">
    <location>
        <begin position="111"/>
        <end position="121"/>
    </location>
</feature>
<feature type="helix" evidence="26">
    <location>
        <begin position="129"/>
        <end position="141"/>
    </location>
</feature>
<feature type="helix" evidence="26">
    <location>
        <begin position="143"/>
        <end position="153"/>
    </location>
</feature>
<sequence>MGNGMNKILPGLYIGNFKDARDAEQLSKNKVTHILSVHDSARPMLEGVKYLCIPAADSPSQNLTRHFKESIKFIHECRLRGESCLVHCLAGVSRSVTLVIAYIMTVTDFGWEDALHTVRAGRSCANPNVGFQRQLQEFEKHEVHQYRQWLKEEYGESPLQDAEEAKNILAAPGILKFWAFLRRL</sequence>
<protein>
    <recommendedName>
        <fullName evidence="14">Dual specificity protein phosphatase 22</fullName>
        <ecNumber evidence="8">3.1.3.16</ecNumber>
        <ecNumber evidence="6">3.1.3.48</ecNumber>
    </recommendedName>
    <alternativeName>
        <fullName evidence="11">JNK pathway associated phosphatase</fullName>
        <shortName evidence="11">JKAP</shortName>
    </alternativeName>
    <alternativeName>
        <fullName>JNK-stimulatory phosphatase-1</fullName>
        <shortName>JSP-1</shortName>
    </alternativeName>
    <alternativeName>
        <fullName>Low molecular weight dual specificity phosphatase 2</fullName>
        <shortName>LMW-DSP2</shortName>
    </alternativeName>
    <alternativeName>
        <fullName>Mitogen-activated protein kinase phosphatase x</fullName>
        <shortName>MAP kinase phosphatase x</shortName>
        <shortName>MKP-x</shortName>
    </alternativeName>
</protein>
<gene>
    <name type="primary">DUSP22</name>
    <name type="synonym">JSP1</name>
    <name type="synonym">LMWDSP2</name>
    <name type="synonym">MKPX</name>
</gene>
<organism>
    <name type="scientific">Homo sapiens</name>
    <name type="common">Human</name>
    <dbReference type="NCBI Taxonomy" id="9606"/>
    <lineage>
        <taxon>Eukaryota</taxon>
        <taxon>Metazoa</taxon>
        <taxon>Chordata</taxon>
        <taxon>Craniata</taxon>
        <taxon>Vertebrata</taxon>
        <taxon>Euteleostomi</taxon>
        <taxon>Mammalia</taxon>
        <taxon>Eutheria</taxon>
        <taxon>Euarchontoglires</taxon>
        <taxon>Primates</taxon>
        <taxon>Haplorrhini</taxon>
        <taxon>Catarrhini</taxon>
        <taxon>Hominidae</taxon>
        <taxon>Homo</taxon>
    </lineage>
</organism>
<evidence type="ECO:0000250" key="1">
    <source>
        <dbReference type="UniProtKB" id="Q99N11"/>
    </source>
</evidence>
<evidence type="ECO:0000255" key="2">
    <source>
        <dbReference type="PROSITE-ProRule" id="PRU00160"/>
    </source>
</evidence>
<evidence type="ECO:0000269" key="3">
    <source>
    </source>
</evidence>
<evidence type="ECO:0000269" key="4">
    <source>
    </source>
</evidence>
<evidence type="ECO:0000269" key="5">
    <source>
    </source>
</evidence>
<evidence type="ECO:0000269" key="6">
    <source>
    </source>
</evidence>
<evidence type="ECO:0000269" key="7">
    <source>
    </source>
</evidence>
<evidence type="ECO:0000269" key="8">
    <source>
    </source>
</evidence>
<evidence type="ECO:0000303" key="9">
    <source>
    </source>
</evidence>
<evidence type="ECO:0000303" key="10">
    <source>
    </source>
</evidence>
<evidence type="ECO:0000303" key="11">
    <source>
    </source>
</evidence>
<evidence type="ECO:0000303" key="12">
    <source>
    </source>
</evidence>
<evidence type="ECO:0000303" key="13">
    <source>
    </source>
</evidence>
<evidence type="ECO:0000303" key="14">
    <source>
    </source>
</evidence>
<evidence type="ECO:0000303" key="15">
    <source ref="7"/>
</evidence>
<evidence type="ECO:0000305" key="16"/>
<evidence type="ECO:0000305" key="17">
    <source>
    </source>
</evidence>
<evidence type="ECO:0007744" key="18">
    <source>
        <dbReference type="PDB" id="4WOH"/>
    </source>
</evidence>
<evidence type="ECO:0007744" key="19">
    <source>
        <dbReference type="PDB" id="6L1S"/>
    </source>
</evidence>
<evidence type="ECO:0007744" key="20">
    <source>
        <dbReference type="PDB" id="6LMY"/>
    </source>
</evidence>
<evidence type="ECO:0007744" key="21">
    <source>
        <dbReference type="PDB" id="6LOT"/>
    </source>
</evidence>
<evidence type="ECO:0007744" key="22">
    <source>
        <dbReference type="PDB" id="6LOU"/>
    </source>
</evidence>
<evidence type="ECO:0007744" key="23">
    <source>
        <dbReference type="PDB" id="6LVQ"/>
    </source>
</evidence>
<evidence type="ECO:0007744" key="24">
    <source>
        <dbReference type="PDB" id="7C8S"/>
    </source>
</evidence>
<evidence type="ECO:0007744" key="25">
    <source>
    </source>
</evidence>
<evidence type="ECO:0007829" key="26">
    <source>
        <dbReference type="PDB" id="7C8S"/>
    </source>
</evidence>
<reference key="1">
    <citation type="journal article" date="2001" name="Proc. Natl. Acad. Sci. U.S.A.">
        <title>Activation of the Jnk signaling pathway by a dual-specificity phosphatase, JSP-1.</title>
        <authorList>
            <person name="Shen Y."/>
            <person name="Luche R."/>
            <person name="Wei B."/>
            <person name="Gordon M.L."/>
            <person name="Diltz C.D."/>
            <person name="Tonks N.K."/>
        </authorList>
    </citation>
    <scope>NUCLEOTIDE SEQUENCE [MRNA] (ISOFORM 1)</scope>
    <scope>IDENTIFICATION (ISOFORM 2)</scope>
    <scope>FUNCTION</scope>
    <scope>TISSUE SPECIFICITY</scope>
</reference>
<reference key="2">
    <citation type="submission" date="1999-07" db="EMBL/GenBank/DDBJ databases">
        <title>Novel genes expressed in hematopoietic stem/progenitor cells from myelodysplastic syndromes patient.</title>
        <authorList>
            <person name="Gu J."/>
            <person name="Huang Q."/>
            <person name="Yu Y."/>
            <person name="Xu S."/>
            <person name="Wang Y."/>
            <person name="Han Z."/>
            <person name="Chen Z."/>
            <person name="Zhou J."/>
            <person name="Tu Y."/>
            <person name="Gu W."/>
            <person name="Fu G."/>
            <person name="Huang C."/>
        </authorList>
    </citation>
    <scope>NUCLEOTIDE SEQUENCE [LARGE SCALE MRNA] (ISOFORM 1)</scope>
    <source>
        <tissue>Hematopoietic stem cell</tissue>
    </source>
</reference>
<reference key="3">
    <citation type="submission" date="2003-03" db="EMBL/GenBank/DDBJ databases">
        <title>Cloning and characterization of human LMW-DSP2 gene.</title>
        <authorList>
            <person name="Mao Y."/>
            <person name="Xie Y."/>
            <person name="Cheng H."/>
        </authorList>
    </citation>
    <scope>NUCLEOTIDE SEQUENCE [MRNA] (ISOFORM 1)</scope>
</reference>
<reference key="4">
    <citation type="journal article" date="2004" name="Nat. Genet.">
        <title>Complete sequencing and characterization of 21,243 full-length human cDNAs.</title>
        <authorList>
            <person name="Ota T."/>
            <person name="Suzuki Y."/>
            <person name="Nishikawa T."/>
            <person name="Otsuki T."/>
            <person name="Sugiyama T."/>
            <person name="Irie R."/>
            <person name="Wakamatsu A."/>
            <person name="Hayashi K."/>
            <person name="Sato H."/>
            <person name="Nagai K."/>
            <person name="Kimura K."/>
            <person name="Makita H."/>
            <person name="Sekine M."/>
            <person name="Obayashi M."/>
            <person name="Nishi T."/>
            <person name="Shibahara T."/>
            <person name="Tanaka T."/>
            <person name="Ishii S."/>
            <person name="Yamamoto J."/>
            <person name="Saito K."/>
            <person name="Kawai Y."/>
            <person name="Isono Y."/>
            <person name="Nakamura Y."/>
            <person name="Nagahari K."/>
            <person name="Murakami K."/>
            <person name="Yasuda T."/>
            <person name="Iwayanagi T."/>
            <person name="Wagatsuma M."/>
            <person name="Shiratori A."/>
            <person name="Sudo H."/>
            <person name="Hosoiri T."/>
            <person name="Kaku Y."/>
            <person name="Kodaira H."/>
            <person name="Kondo H."/>
            <person name="Sugawara M."/>
            <person name="Takahashi M."/>
            <person name="Kanda K."/>
            <person name="Yokoi T."/>
            <person name="Furuya T."/>
            <person name="Kikkawa E."/>
            <person name="Omura Y."/>
            <person name="Abe K."/>
            <person name="Kamihara K."/>
            <person name="Katsuta N."/>
            <person name="Sato K."/>
            <person name="Tanikawa M."/>
            <person name="Yamazaki M."/>
            <person name="Ninomiya K."/>
            <person name="Ishibashi T."/>
            <person name="Yamashita H."/>
            <person name="Murakawa K."/>
            <person name="Fujimori K."/>
            <person name="Tanai H."/>
            <person name="Kimata M."/>
            <person name="Watanabe M."/>
            <person name="Hiraoka S."/>
            <person name="Chiba Y."/>
            <person name="Ishida S."/>
            <person name="Ono Y."/>
            <person name="Takiguchi S."/>
            <person name="Watanabe S."/>
            <person name="Yosida M."/>
            <person name="Hotuta T."/>
            <person name="Kusano J."/>
            <person name="Kanehori K."/>
            <person name="Takahashi-Fujii A."/>
            <person name="Hara H."/>
            <person name="Tanase T.-O."/>
            <person name="Nomura Y."/>
            <person name="Togiya S."/>
            <person name="Komai F."/>
            <person name="Hara R."/>
            <person name="Takeuchi K."/>
            <person name="Arita M."/>
            <person name="Imose N."/>
            <person name="Musashino K."/>
            <person name="Yuuki H."/>
            <person name="Oshima A."/>
            <person name="Sasaki N."/>
            <person name="Aotsuka S."/>
            <person name="Yoshikawa Y."/>
            <person name="Matsunawa H."/>
            <person name="Ichihara T."/>
            <person name="Shiohata N."/>
            <person name="Sano S."/>
            <person name="Moriya S."/>
            <person name="Momiyama H."/>
            <person name="Satoh N."/>
            <person name="Takami S."/>
            <person name="Terashima Y."/>
            <person name="Suzuki O."/>
            <person name="Nakagawa S."/>
            <person name="Senoh A."/>
            <person name="Mizoguchi H."/>
            <person name="Goto Y."/>
            <person name="Shimizu F."/>
            <person name="Wakebe H."/>
            <person name="Hishigaki H."/>
            <person name="Watanabe T."/>
            <person name="Sugiyama A."/>
            <person name="Takemoto M."/>
            <person name="Kawakami B."/>
            <person name="Yamazaki M."/>
            <person name="Watanabe K."/>
            <person name="Kumagai A."/>
            <person name="Itakura S."/>
            <person name="Fukuzumi Y."/>
            <person name="Fujimori Y."/>
            <person name="Komiyama M."/>
            <person name="Tashiro H."/>
            <person name="Tanigami A."/>
            <person name="Fujiwara T."/>
            <person name="Ono T."/>
            <person name="Yamada K."/>
            <person name="Fujii Y."/>
            <person name="Ozaki K."/>
            <person name="Hirao M."/>
            <person name="Ohmori Y."/>
            <person name="Kawabata A."/>
            <person name="Hikiji T."/>
            <person name="Kobatake N."/>
            <person name="Inagaki H."/>
            <person name="Ikema Y."/>
            <person name="Okamoto S."/>
            <person name="Okitani R."/>
            <person name="Kawakami T."/>
            <person name="Noguchi S."/>
            <person name="Itoh T."/>
            <person name="Shigeta K."/>
            <person name="Senba T."/>
            <person name="Matsumura K."/>
            <person name="Nakajima Y."/>
            <person name="Mizuno T."/>
            <person name="Morinaga M."/>
            <person name="Sasaki M."/>
            <person name="Togashi T."/>
            <person name="Oyama M."/>
            <person name="Hata H."/>
            <person name="Watanabe M."/>
            <person name="Komatsu T."/>
            <person name="Mizushima-Sugano J."/>
            <person name="Satoh T."/>
            <person name="Shirai Y."/>
            <person name="Takahashi Y."/>
            <person name="Nakagawa K."/>
            <person name="Okumura K."/>
            <person name="Nagase T."/>
            <person name="Nomura N."/>
            <person name="Kikuchi H."/>
            <person name="Masuho Y."/>
            <person name="Yamashita R."/>
            <person name="Nakai K."/>
            <person name="Yada T."/>
            <person name="Nakamura Y."/>
            <person name="Ohara O."/>
            <person name="Isogai T."/>
            <person name="Sugano S."/>
        </authorList>
    </citation>
    <scope>NUCLEOTIDE SEQUENCE [LARGE SCALE MRNA] (ISOFORM 2)</scope>
    <source>
        <tissue>Thalamus</tissue>
    </source>
</reference>
<reference key="5">
    <citation type="journal article" date="2003" name="Nature">
        <title>The DNA sequence and analysis of human chromosome 6.</title>
        <authorList>
            <person name="Mungall A.J."/>
            <person name="Palmer S.A."/>
            <person name="Sims S.K."/>
            <person name="Edwards C.A."/>
            <person name="Ashurst J.L."/>
            <person name="Wilming L."/>
            <person name="Jones M.C."/>
            <person name="Horton R."/>
            <person name="Hunt S.E."/>
            <person name="Scott C.E."/>
            <person name="Gilbert J.G.R."/>
            <person name="Clamp M.E."/>
            <person name="Bethel G."/>
            <person name="Milne S."/>
            <person name="Ainscough R."/>
            <person name="Almeida J.P."/>
            <person name="Ambrose K.D."/>
            <person name="Andrews T.D."/>
            <person name="Ashwell R.I.S."/>
            <person name="Babbage A.K."/>
            <person name="Bagguley C.L."/>
            <person name="Bailey J."/>
            <person name="Banerjee R."/>
            <person name="Barker D.J."/>
            <person name="Barlow K.F."/>
            <person name="Bates K."/>
            <person name="Beare D.M."/>
            <person name="Beasley H."/>
            <person name="Beasley O."/>
            <person name="Bird C.P."/>
            <person name="Blakey S.E."/>
            <person name="Bray-Allen S."/>
            <person name="Brook J."/>
            <person name="Brown A.J."/>
            <person name="Brown J.Y."/>
            <person name="Burford D.C."/>
            <person name="Burrill W."/>
            <person name="Burton J."/>
            <person name="Carder C."/>
            <person name="Carter N.P."/>
            <person name="Chapman J.C."/>
            <person name="Clark S.Y."/>
            <person name="Clark G."/>
            <person name="Clee C.M."/>
            <person name="Clegg S."/>
            <person name="Cobley V."/>
            <person name="Collier R.E."/>
            <person name="Collins J.E."/>
            <person name="Colman L.K."/>
            <person name="Corby N.R."/>
            <person name="Coville G.J."/>
            <person name="Culley K.M."/>
            <person name="Dhami P."/>
            <person name="Davies J."/>
            <person name="Dunn M."/>
            <person name="Earthrowl M.E."/>
            <person name="Ellington A.E."/>
            <person name="Evans K.A."/>
            <person name="Faulkner L."/>
            <person name="Francis M.D."/>
            <person name="Frankish A."/>
            <person name="Frankland J."/>
            <person name="French L."/>
            <person name="Garner P."/>
            <person name="Garnett J."/>
            <person name="Ghori M.J."/>
            <person name="Gilby L.M."/>
            <person name="Gillson C.J."/>
            <person name="Glithero R.J."/>
            <person name="Grafham D.V."/>
            <person name="Grant M."/>
            <person name="Gribble S."/>
            <person name="Griffiths C."/>
            <person name="Griffiths M.N.D."/>
            <person name="Hall R."/>
            <person name="Halls K.S."/>
            <person name="Hammond S."/>
            <person name="Harley J.L."/>
            <person name="Hart E.A."/>
            <person name="Heath P.D."/>
            <person name="Heathcott R."/>
            <person name="Holmes S.J."/>
            <person name="Howden P.J."/>
            <person name="Howe K.L."/>
            <person name="Howell G.R."/>
            <person name="Huckle E."/>
            <person name="Humphray S.J."/>
            <person name="Humphries M.D."/>
            <person name="Hunt A.R."/>
            <person name="Johnson C.M."/>
            <person name="Joy A.A."/>
            <person name="Kay M."/>
            <person name="Keenan S.J."/>
            <person name="Kimberley A.M."/>
            <person name="King A."/>
            <person name="Laird G.K."/>
            <person name="Langford C."/>
            <person name="Lawlor S."/>
            <person name="Leongamornlert D.A."/>
            <person name="Leversha M."/>
            <person name="Lloyd C.R."/>
            <person name="Lloyd D.M."/>
            <person name="Loveland J.E."/>
            <person name="Lovell J."/>
            <person name="Martin S."/>
            <person name="Mashreghi-Mohammadi M."/>
            <person name="Maslen G.L."/>
            <person name="Matthews L."/>
            <person name="McCann O.T."/>
            <person name="McLaren S.J."/>
            <person name="McLay K."/>
            <person name="McMurray A."/>
            <person name="Moore M.J.F."/>
            <person name="Mullikin J.C."/>
            <person name="Niblett D."/>
            <person name="Nickerson T."/>
            <person name="Novik K.L."/>
            <person name="Oliver K."/>
            <person name="Overton-Larty E.K."/>
            <person name="Parker A."/>
            <person name="Patel R."/>
            <person name="Pearce A.V."/>
            <person name="Peck A.I."/>
            <person name="Phillimore B.J.C.T."/>
            <person name="Phillips S."/>
            <person name="Plumb R.W."/>
            <person name="Porter K.M."/>
            <person name="Ramsey Y."/>
            <person name="Ranby S.A."/>
            <person name="Rice C.M."/>
            <person name="Ross M.T."/>
            <person name="Searle S.M."/>
            <person name="Sehra H.K."/>
            <person name="Sheridan E."/>
            <person name="Skuce C.D."/>
            <person name="Smith S."/>
            <person name="Smith M."/>
            <person name="Spraggon L."/>
            <person name="Squares S.L."/>
            <person name="Steward C.A."/>
            <person name="Sycamore N."/>
            <person name="Tamlyn-Hall G."/>
            <person name="Tester J."/>
            <person name="Theaker A.J."/>
            <person name="Thomas D.W."/>
            <person name="Thorpe A."/>
            <person name="Tracey A."/>
            <person name="Tromans A."/>
            <person name="Tubby B."/>
            <person name="Wall M."/>
            <person name="Wallis J.M."/>
            <person name="West A.P."/>
            <person name="White S.S."/>
            <person name="Whitehead S.L."/>
            <person name="Whittaker H."/>
            <person name="Wild A."/>
            <person name="Willey D.J."/>
            <person name="Wilmer T.E."/>
            <person name="Wood J.M."/>
            <person name="Wray P.W."/>
            <person name="Wyatt J.C."/>
            <person name="Young L."/>
            <person name="Younger R.M."/>
            <person name="Bentley D.R."/>
            <person name="Coulson A."/>
            <person name="Durbin R.M."/>
            <person name="Hubbard T."/>
            <person name="Sulston J.E."/>
            <person name="Dunham I."/>
            <person name="Rogers J."/>
            <person name="Beck S."/>
        </authorList>
    </citation>
    <scope>NUCLEOTIDE SEQUENCE [LARGE SCALE GENOMIC DNA]</scope>
</reference>
<reference key="6">
    <citation type="journal article" date="2004" name="Genome Res.">
        <title>The status, quality, and expansion of the NIH full-length cDNA project: the Mammalian Gene Collection (MGC).</title>
        <authorList>
            <consortium name="The MGC Project Team"/>
        </authorList>
    </citation>
    <scope>NUCLEOTIDE SEQUENCE [LARGE SCALE MRNA] (ISOFORM 1)</scope>
    <source>
        <tissue>Lung</tissue>
        <tissue>Pancreas</tissue>
    </source>
</reference>
<reference key="7">
    <citation type="submission" date="2005-03" db="EMBL/GenBank/DDBJ databases">
        <authorList>
            <person name="Totoki Y."/>
            <person name="Toyoda A."/>
            <person name="Takeda T."/>
            <person name="Sakaki Y."/>
            <person name="Tanaka A."/>
            <person name="Yokoyama S."/>
            <person name="Ohara O."/>
            <person name="Nagase T."/>
            <person name="Kikuno R.F."/>
        </authorList>
    </citation>
    <scope>NUCLEOTIDE SEQUENCE [LARGE SCALE MRNA] OF 56-184 (ISOFORM 2)</scope>
    <source>
        <tissue>Myeloid</tissue>
    </source>
</reference>
<reference key="8">
    <citation type="journal article" date="2010" name="FEBS J.">
        <title>Myristoylation of the dual-specificity phosphatase c-JUN N-terminal kinase (JNK) stimulatory phosphatase 1 is necessary for its activation of JNK signaling and apoptosis.</title>
        <authorList>
            <person name="Schwertassek U."/>
            <person name="Buckley D.A."/>
            <person name="Xu C.F."/>
            <person name="Lindsay A.J."/>
            <person name="McCaffrey M.W."/>
            <person name="Neubert T.A."/>
            <person name="Tonks N.K."/>
        </authorList>
    </citation>
    <scope>SUBCELLULAR LOCATION</scope>
    <scope>MYRISTOYLATION AT GLY-2</scope>
</reference>
<reference key="9">
    <citation type="journal article" date="2013" name="J. Proteome Res.">
        <title>Toward a comprehensive characterization of a human cancer cell phosphoproteome.</title>
        <authorList>
            <person name="Zhou H."/>
            <person name="Di Palma S."/>
            <person name="Preisinger C."/>
            <person name="Peng M."/>
            <person name="Polat A.N."/>
            <person name="Heck A.J."/>
            <person name="Mohammed S."/>
        </authorList>
    </citation>
    <scope>PHOSPHORYLATION [LARGE SCALE ANALYSIS] AT SER-58</scope>
    <scope>IDENTIFICATION BY MASS SPECTROMETRY [LARGE SCALE ANALYSIS]</scope>
    <source>
        <tissue>Erythroleukemia</tissue>
    </source>
</reference>
<reference evidence="16" key="10">
    <citation type="journal article" date="2014" name="Nat. Commun.">
        <title>The phosphatase JKAP/DUSP22 inhibits T-cell receptor signalling and autoimmunity by inactivating Lck.</title>
        <authorList>
            <person name="Li J.P."/>
            <person name="Yang C.Y."/>
            <person name="Chuang H.C."/>
            <person name="Lan J.L."/>
            <person name="Chen D.Y."/>
            <person name="Chen Y.M."/>
            <person name="Wang X."/>
            <person name="Chen A.J."/>
            <person name="Belmont J.W."/>
            <person name="Tan T.H."/>
        </authorList>
    </citation>
    <scope>FUNCTION</scope>
    <scope>CATALYTIC ACTIVITY</scope>
    <scope>INTERACTION WITH LCK</scope>
</reference>
<reference evidence="16" key="11">
    <citation type="journal article" date="2024" name="Nat. Commun.">
        <title>The phosphatase DUSP22 inhibits UBR2-mediated K63-ubiquitination and activation of Lck downstream of TCR signalling.</title>
        <authorList>
            <person name="Shih Y.C."/>
            <person name="Chen H.F."/>
            <person name="Wu C.Y."/>
            <person name="Ciou Y.R."/>
            <person name="Wang C.W."/>
            <person name="Chuang H.C."/>
            <person name="Tan T.H."/>
        </authorList>
    </citation>
    <scope>FUNCTION</scope>
    <scope>CATALYTIC ACTIVITY</scope>
    <scope>INTERACTION WITH UBR2</scope>
    <scope>MUTAGENESIS OF CYS-88</scope>
</reference>
<reference evidence="18" key="12">
    <citation type="journal article" date="2007" name="Proteins">
        <title>Crystal structure of human dual specificity phosphatase, JNK stimulatory phosphatase-1, at 1.5 A resolution.</title>
        <authorList>
            <person name="Yokota T."/>
            <person name="Nara Y."/>
            <person name="Kashima A."/>
            <person name="Matsubara K."/>
            <person name="Misawa S."/>
            <person name="Kato R."/>
            <person name="Sugio S."/>
        </authorList>
    </citation>
    <scope>X-RAY CRYSTALLOGRAPHY (1.5 ANGSTROMS) OF 1-163</scope>
    <scope>SUBUNIT</scope>
    <scope>IDENTIFICATION BY MASS SPECTROMETRY</scope>
    <scope>ACTIVE SITE</scope>
</reference>
<reference evidence="18" key="13">
    <citation type="journal article" date="2015" name="Acta Crystallogr. F Struct. Biol. Commun.">
        <title>Structural analysis of human dual-specificity phosphatase 22 complexed with a phosphotyrosine-like substrate.</title>
        <authorList>
            <person name="Lountos G.T."/>
            <person name="Cherry S."/>
            <person name="Tropea J.E."/>
            <person name="Waugh D.S."/>
        </authorList>
    </citation>
    <scope>X-RAY CRYSTALLOGRAPHY (1.34 ANGSTROMS) OF 1-163 OF MUTANT ALA-24/ALA-28/ALA-30/SER-88 IN COMPLEX WITH SUBSTRATE ANALOG 4-NITROPHENYL PHOSPHATE</scope>
    <scope>ACTIVE SITE</scope>
</reference>
<reference evidence="19 20 21 22 23 24" key="14">
    <citation type="journal article" date="2020" name="Int. J. Mol. Sci.">
        <title>Structural Insights into the Active Site Formation of DUSP22 in N-loop-containing Protein Tyrosine Phosphatases.</title>
        <authorList>
            <person name="Lai C.H."/>
            <person name="Chang C.C."/>
            <person name="Chuang H.C."/>
            <person name="Tan T.H."/>
            <person name="Lyu P.C."/>
        </authorList>
    </citation>
    <scope>X-RAY CRYSTALLOGRAPHY (1.31 ANGSTROMS) OF 1-155</scope>
    <scope>MUTAGENESIS OF ASP-57; SER-93 AND ASN-128</scope>
    <scope>ACTIVE SITE</scope>
</reference>
<accession>Q9NRW4</accession>
<accession>B4DK56</accession>
<accession>Q59GW2</accession>
<accession>Q5VWR2</accession>
<accession>Q96AR1</accession>
<proteinExistence type="evidence at protein level"/>
<name>DUS22_HUMAN</name>
<keyword id="KW-0002">3D-structure</keyword>
<keyword id="KW-0025">Alternative splicing</keyword>
<keyword id="KW-0963">Cytoplasm</keyword>
<keyword id="KW-0378">Hydrolase</keyword>
<keyword id="KW-0391">Immunity</keyword>
<keyword id="KW-0449">Lipoprotein</keyword>
<keyword id="KW-0519">Myristate</keyword>
<keyword id="KW-0597">Phosphoprotein</keyword>
<keyword id="KW-0904">Protein phosphatase</keyword>
<keyword id="KW-1267">Proteomics identification</keyword>
<keyword id="KW-1185">Reference proteome</keyword>